<dbReference type="EC" id="5.3.1.23" evidence="1"/>
<dbReference type="EMBL" id="GG657450">
    <property type="protein sequence ID" value="OAT05280.1"/>
    <property type="molecule type" value="Genomic_DNA"/>
</dbReference>
<dbReference type="RefSeq" id="XP_002627028.1">
    <property type="nucleotide sequence ID" value="XM_002626982.1"/>
</dbReference>
<dbReference type="SMR" id="C5JGS0"/>
<dbReference type="STRING" id="559298.C5JGS0"/>
<dbReference type="GeneID" id="8506731"/>
<dbReference type="KEGG" id="bgh:BDBG_01699"/>
<dbReference type="VEuPathDB" id="FungiDB:BDBG_01699"/>
<dbReference type="HOGENOM" id="CLU_016218_1_3_1"/>
<dbReference type="OrthoDB" id="2461at2759"/>
<dbReference type="UniPathway" id="UPA00904">
    <property type="reaction ID" value="UER00874"/>
</dbReference>
<dbReference type="Proteomes" id="UP000002038">
    <property type="component" value="Unassembled WGS sequence"/>
</dbReference>
<dbReference type="GO" id="GO:0005737">
    <property type="term" value="C:cytoplasm"/>
    <property type="evidence" value="ECO:0007669"/>
    <property type="project" value="UniProtKB-SubCell"/>
</dbReference>
<dbReference type="GO" id="GO:0005634">
    <property type="term" value="C:nucleus"/>
    <property type="evidence" value="ECO:0007669"/>
    <property type="project" value="UniProtKB-SubCell"/>
</dbReference>
<dbReference type="GO" id="GO:0046523">
    <property type="term" value="F:S-methyl-5-thioribose-1-phosphate isomerase activity"/>
    <property type="evidence" value="ECO:0007669"/>
    <property type="project" value="UniProtKB-UniRule"/>
</dbReference>
<dbReference type="GO" id="GO:0019509">
    <property type="term" value="P:L-methionine salvage from methylthioadenosine"/>
    <property type="evidence" value="ECO:0007669"/>
    <property type="project" value="UniProtKB-UniRule"/>
</dbReference>
<dbReference type="FunFam" id="1.20.120.420:FF:000003">
    <property type="entry name" value="Methylthioribose-1-phosphate isomerase"/>
    <property type="match status" value="1"/>
</dbReference>
<dbReference type="FunFam" id="3.40.50.10470:FF:000003">
    <property type="entry name" value="Methylthioribose-1-phosphate isomerase"/>
    <property type="match status" value="1"/>
</dbReference>
<dbReference type="Gene3D" id="1.20.120.420">
    <property type="entry name" value="translation initiation factor eif-2b, domain 1"/>
    <property type="match status" value="1"/>
</dbReference>
<dbReference type="Gene3D" id="3.40.50.10470">
    <property type="entry name" value="Translation initiation factor eif-2b, domain 2"/>
    <property type="match status" value="1"/>
</dbReference>
<dbReference type="HAMAP" id="MF_01678">
    <property type="entry name" value="Salvage_MtnA"/>
    <property type="match status" value="1"/>
</dbReference>
<dbReference type="InterPro" id="IPR000649">
    <property type="entry name" value="IF-2B-related"/>
</dbReference>
<dbReference type="InterPro" id="IPR005251">
    <property type="entry name" value="IF-M1Pi"/>
</dbReference>
<dbReference type="InterPro" id="IPR042529">
    <property type="entry name" value="IF_2B-like_C"/>
</dbReference>
<dbReference type="InterPro" id="IPR011559">
    <property type="entry name" value="Initiation_fac_2B_a/b/d"/>
</dbReference>
<dbReference type="InterPro" id="IPR027363">
    <property type="entry name" value="M1Pi_N"/>
</dbReference>
<dbReference type="InterPro" id="IPR037171">
    <property type="entry name" value="NagB/RpiA_transferase-like"/>
</dbReference>
<dbReference type="NCBIfam" id="TIGR00524">
    <property type="entry name" value="eIF-2B_rel"/>
    <property type="match status" value="1"/>
</dbReference>
<dbReference type="NCBIfam" id="NF004326">
    <property type="entry name" value="PRK05720.1"/>
    <property type="match status" value="1"/>
</dbReference>
<dbReference type="NCBIfam" id="TIGR00512">
    <property type="entry name" value="salvage_mtnA"/>
    <property type="match status" value="1"/>
</dbReference>
<dbReference type="PANTHER" id="PTHR43475">
    <property type="entry name" value="METHYLTHIORIBOSE-1-PHOSPHATE ISOMERASE"/>
    <property type="match status" value="1"/>
</dbReference>
<dbReference type="PANTHER" id="PTHR43475:SF1">
    <property type="entry name" value="METHYLTHIORIBOSE-1-PHOSPHATE ISOMERASE"/>
    <property type="match status" value="1"/>
</dbReference>
<dbReference type="Pfam" id="PF01008">
    <property type="entry name" value="IF-2B"/>
    <property type="match status" value="1"/>
</dbReference>
<dbReference type="SUPFAM" id="SSF100950">
    <property type="entry name" value="NagB/RpiA/CoA transferase-like"/>
    <property type="match status" value="1"/>
</dbReference>
<protein>
    <recommendedName>
        <fullName evidence="1">Methylthioribose-1-phosphate isomerase</fullName>
        <shortName evidence="1">M1Pi</shortName>
        <shortName evidence="1">MTR-1-P isomerase</shortName>
        <ecNumber evidence="1">5.3.1.23</ecNumber>
    </recommendedName>
    <alternativeName>
        <fullName evidence="1">S-methyl-5-thioribose-1-phosphate isomerase</fullName>
    </alternativeName>
    <alternativeName>
        <fullName evidence="1">Translation initiation factor eIF-2B subunit alpha/beta/delta-like protein</fullName>
    </alternativeName>
</protein>
<organism>
    <name type="scientific">Blastomyces gilchristii (strain SLH14081)</name>
    <name type="common">Blastomyces dermatitidis</name>
    <dbReference type="NCBI Taxonomy" id="559298"/>
    <lineage>
        <taxon>Eukaryota</taxon>
        <taxon>Fungi</taxon>
        <taxon>Dikarya</taxon>
        <taxon>Ascomycota</taxon>
        <taxon>Pezizomycotina</taxon>
        <taxon>Eurotiomycetes</taxon>
        <taxon>Eurotiomycetidae</taxon>
        <taxon>Onygenales</taxon>
        <taxon>Ajellomycetaceae</taxon>
        <taxon>Blastomyces</taxon>
    </lineage>
</organism>
<gene>
    <name evidence="1" type="primary">MRI1</name>
    <name type="ORF">BDBG_01699</name>
</gene>
<evidence type="ECO:0000255" key="1">
    <source>
        <dbReference type="HAMAP-Rule" id="MF_03119"/>
    </source>
</evidence>
<name>MTNA_BLAGS</name>
<reference key="1">
    <citation type="journal article" date="2015" name="PLoS Genet.">
        <title>The dynamic genome and transcriptome of the human fungal pathogen Blastomyces and close relative Emmonsia.</title>
        <authorList>
            <person name="Munoz J.F."/>
            <person name="Gauthier G.M."/>
            <person name="Desjardins C.A."/>
            <person name="Gallo J.E."/>
            <person name="Holder J."/>
            <person name="Sullivan T.D."/>
            <person name="Marty A.J."/>
            <person name="Carmen J.C."/>
            <person name="Chen Z."/>
            <person name="Ding L."/>
            <person name="Gujja S."/>
            <person name="Magrini V."/>
            <person name="Misas E."/>
            <person name="Mitreva M."/>
            <person name="Priest M."/>
            <person name="Saif S."/>
            <person name="Whiston E.A."/>
            <person name="Young S."/>
            <person name="Zeng Q."/>
            <person name="Goldman W.E."/>
            <person name="Mardis E.R."/>
            <person name="Taylor J.W."/>
            <person name="McEwen J.G."/>
            <person name="Clay O.K."/>
            <person name="Klein B.S."/>
            <person name="Cuomo C.A."/>
        </authorList>
    </citation>
    <scope>NUCLEOTIDE SEQUENCE [LARGE SCALE GENOMIC DNA]</scope>
    <source>
        <strain>SLH14081</strain>
    </source>
</reference>
<comment type="function">
    <text evidence="1">Catalyzes the interconversion of methylthioribose-1-phosphate (MTR-1-P) into methylthioribulose-1-phosphate (MTRu-1-P).</text>
</comment>
<comment type="catalytic activity">
    <reaction evidence="1">
        <text>5-(methylsulfanyl)-alpha-D-ribose 1-phosphate = 5-(methylsulfanyl)-D-ribulose 1-phosphate</text>
        <dbReference type="Rhea" id="RHEA:19989"/>
        <dbReference type="ChEBI" id="CHEBI:58533"/>
        <dbReference type="ChEBI" id="CHEBI:58548"/>
        <dbReference type="EC" id="5.3.1.23"/>
    </reaction>
</comment>
<comment type="pathway">
    <text evidence="1">Amino-acid biosynthesis; L-methionine biosynthesis via salvage pathway; L-methionine from S-methyl-5-thio-alpha-D-ribose 1-phosphate: step 1/6.</text>
</comment>
<comment type="subcellular location">
    <subcellularLocation>
        <location evidence="1">Cytoplasm</location>
    </subcellularLocation>
    <subcellularLocation>
        <location evidence="1">Nucleus</location>
    </subcellularLocation>
</comment>
<comment type="similarity">
    <text evidence="1">Belongs to the eIF-2B alpha/beta/delta subunits family. MtnA subfamily.</text>
</comment>
<accession>C5JGS0</accession>
<accession>A0A179UBR7</accession>
<feature type="chain" id="PRO_0000402010" description="Methylthioribose-1-phosphate isomerase">
    <location>
        <begin position="1"/>
        <end position="392"/>
    </location>
</feature>
<feature type="active site" description="Proton donor" evidence="1">
    <location>
        <position position="267"/>
    </location>
</feature>
<feature type="site" description="Transition state stabilizer" evidence="1">
    <location>
        <position position="179"/>
    </location>
</feature>
<proteinExistence type="inferred from homology"/>
<keyword id="KW-0028">Amino-acid biosynthesis</keyword>
<keyword id="KW-0963">Cytoplasm</keyword>
<keyword id="KW-0413">Isomerase</keyword>
<keyword id="KW-0486">Methionine biosynthesis</keyword>
<keyword id="KW-0539">Nucleus</keyword>
<keyword id="KW-1185">Reference proteome</keyword>
<sequence length="392" mass="41373">MTLAAITYTRGSLSILNQLLLPHQTTYDPLHSACDAWHAIHEMRVRGAPAIAIVAALSLAVELDALAANNQLSPEPKEVEVFIREKLEYLVSSRPTAVNLAEAAGRLGGIVSAKAEVRGVDGREVAEAYIAAAQRMLEDDVKDNRAIGEFGARWVLENAVATGSESGSEKGKVAVLTHCNTGSLATAGYGTALGVIRSLHATGSLERAYCTETRPYNQGSRLTAYELVHDKIPATLITDNMAAALLARNRAGSAASVGVSAIIVGADRVAANGDTANKIGTYGLAVLAKYHGVKFLVAAPRTTIDMNTKTGADIVIEERPKQEVTRVRGPRAGEEVDGLRAMETITVAANGIDVWNPAFDVTPAALIDGIITEVGVVEKDASGAFHLARIFE</sequence>